<organism>
    <name type="scientific">Janthinobacterium sp. (strain Marseille)</name>
    <name type="common">Minibacterium massiliensis</name>
    <dbReference type="NCBI Taxonomy" id="375286"/>
    <lineage>
        <taxon>Bacteria</taxon>
        <taxon>Pseudomonadati</taxon>
        <taxon>Pseudomonadota</taxon>
        <taxon>Betaproteobacteria</taxon>
        <taxon>Burkholderiales</taxon>
        <taxon>Oxalobacteraceae</taxon>
        <taxon>Janthinobacterium</taxon>
    </lineage>
</organism>
<evidence type="ECO:0000255" key="1">
    <source>
        <dbReference type="HAMAP-Rule" id="MF_01631"/>
    </source>
</evidence>
<protein>
    <recommendedName>
        <fullName evidence="1">Bifunctional protein GlmU</fullName>
    </recommendedName>
    <domain>
        <recommendedName>
            <fullName evidence="1">UDP-N-acetylglucosamine pyrophosphorylase</fullName>
            <ecNumber evidence="1">2.7.7.23</ecNumber>
        </recommendedName>
        <alternativeName>
            <fullName evidence="1">N-acetylglucosamine-1-phosphate uridyltransferase</fullName>
        </alternativeName>
    </domain>
    <domain>
        <recommendedName>
            <fullName evidence="1">Glucosamine-1-phosphate N-acetyltransferase</fullName>
            <ecNumber evidence="1">2.3.1.157</ecNumber>
        </recommendedName>
    </domain>
</protein>
<sequence length="452" mass="48211">MNIVILAAGMGKRMQSALPKVLHPLAGKPLLSHVIDTARQLSPSRLCVIYGHGGEQVPQLLQAKDLSFAKQEPQLGTGHAVMQAVPQLDDHTPTLILYGDVPLTTAASLQRLLDSAGNDKLGILTVNLGNPTGYGRIVRENGAITRIVEQKDAKPAELEINEINTGIMVAPTAALKRWLAKLSNNNAQGEYYLTDIVASAVADGVAVVSAQPDHEWETHGVNSKVQLAELERIHQRNIAHALLEQGVTLADPARIDVRGTLTCGRDVTIDVGCVFEGDVSLADGVRIDANCVIHNSTIGARSHVRPYSHFENAVVGAECIIGPYARLRPGTVLAEDVHIGNFVEVKNSDIAAHSKANHLTYVGDSTVGSRVNIGAGTITCNYDGVNKSRTIIEDDVFVGSATQLIAPIRVGKGATLGAGTTLTKDAPADKLTVSRAKQITVDNWQRPVKIKK</sequence>
<dbReference type="EC" id="2.7.7.23" evidence="1"/>
<dbReference type="EC" id="2.3.1.157" evidence="1"/>
<dbReference type="EMBL" id="CP000269">
    <property type="protein sequence ID" value="ABR88422.1"/>
    <property type="molecule type" value="Genomic_DNA"/>
</dbReference>
<dbReference type="RefSeq" id="WP_012081277.1">
    <property type="nucleotide sequence ID" value="NC_009659.1"/>
</dbReference>
<dbReference type="SMR" id="A6T3N4"/>
<dbReference type="STRING" id="375286.mma_3441"/>
<dbReference type="KEGG" id="mms:mma_3441"/>
<dbReference type="eggNOG" id="COG1207">
    <property type="taxonomic scope" value="Bacteria"/>
</dbReference>
<dbReference type="HOGENOM" id="CLU_029499_15_2_4"/>
<dbReference type="OrthoDB" id="9775031at2"/>
<dbReference type="UniPathway" id="UPA00113">
    <property type="reaction ID" value="UER00532"/>
</dbReference>
<dbReference type="UniPathway" id="UPA00113">
    <property type="reaction ID" value="UER00533"/>
</dbReference>
<dbReference type="UniPathway" id="UPA00973"/>
<dbReference type="Proteomes" id="UP000006388">
    <property type="component" value="Chromosome"/>
</dbReference>
<dbReference type="GO" id="GO:0005737">
    <property type="term" value="C:cytoplasm"/>
    <property type="evidence" value="ECO:0007669"/>
    <property type="project" value="UniProtKB-SubCell"/>
</dbReference>
<dbReference type="GO" id="GO:0016020">
    <property type="term" value="C:membrane"/>
    <property type="evidence" value="ECO:0007669"/>
    <property type="project" value="GOC"/>
</dbReference>
<dbReference type="GO" id="GO:0019134">
    <property type="term" value="F:glucosamine-1-phosphate N-acetyltransferase activity"/>
    <property type="evidence" value="ECO:0007669"/>
    <property type="project" value="UniProtKB-UniRule"/>
</dbReference>
<dbReference type="GO" id="GO:0000287">
    <property type="term" value="F:magnesium ion binding"/>
    <property type="evidence" value="ECO:0007669"/>
    <property type="project" value="UniProtKB-UniRule"/>
</dbReference>
<dbReference type="GO" id="GO:0003977">
    <property type="term" value="F:UDP-N-acetylglucosamine diphosphorylase activity"/>
    <property type="evidence" value="ECO:0007669"/>
    <property type="project" value="UniProtKB-UniRule"/>
</dbReference>
<dbReference type="GO" id="GO:0000902">
    <property type="term" value="P:cell morphogenesis"/>
    <property type="evidence" value="ECO:0007669"/>
    <property type="project" value="UniProtKB-UniRule"/>
</dbReference>
<dbReference type="GO" id="GO:0071555">
    <property type="term" value="P:cell wall organization"/>
    <property type="evidence" value="ECO:0007669"/>
    <property type="project" value="UniProtKB-KW"/>
</dbReference>
<dbReference type="GO" id="GO:0009245">
    <property type="term" value="P:lipid A biosynthetic process"/>
    <property type="evidence" value="ECO:0007669"/>
    <property type="project" value="UniProtKB-UniRule"/>
</dbReference>
<dbReference type="GO" id="GO:0009252">
    <property type="term" value="P:peptidoglycan biosynthetic process"/>
    <property type="evidence" value="ECO:0007669"/>
    <property type="project" value="UniProtKB-UniRule"/>
</dbReference>
<dbReference type="GO" id="GO:0008360">
    <property type="term" value="P:regulation of cell shape"/>
    <property type="evidence" value="ECO:0007669"/>
    <property type="project" value="UniProtKB-KW"/>
</dbReference>
<dbReference type="GO" id="GO:0006048">
    <property type="term" value="P:UDP-N-acetylglucosamine biosynthetic process"/>
    <property type="evidence" value="ECO:0007669"/>
    <property type="project" value="UniProtKB-UniPathway"/>
</dbReference>
<dbReference type="CDD" id="cd02540">
    <property type="entry name" value="GT2_GlmU_N_bac"/>
    <property type="match status" value="1"/>
</dbReference>
<dbReference type="CDD" id="cd03353">
    <property type="entry name" value="LbH_GlmU_C"/>
    <property type="match status" value="1"/>
</dbReference>
<dbReference type="Gene3D" id="2.160.10.10">
    <property type="entry name" value="Hexapeptide repeat proteins"/>
    <property type="match status" value="1"/>
</dbReference>
<dbReference type="Gene3D" id="3.90.550.10">
    <property type="entry name" value="Spore Coat Polysaccharide Biosynthesis Protein SpsA, Chain A"/>
    <property type="match status" value="1"/>
</dbReference>
<dbReference type="HAMAP" id="MF_01631">
    <property type="entry name" value="GlmU"/>
    <property type="match status" value="1"/>
</dbReference>
<dbReference type="InterPro" id="IPR005882">
    <property type="entry name" value="Bifunctional_GlmU"/>
</dbReference>
<dbReference type="InterPro" id="IPR050065">
    <property type="entry name" value="GlmU-like"/>
</dbReference>
<dbReference type="InterPro" id="IPR038009">
    <property type="entry name" value="GlmU_C_LbH"/>
</dbReference>
<dbReference type="InterPro" id="IPR001451">
    <property type="entry name" value="Hexapep"/>
</dbReference>
<dbReference type="InterPro" id="IPR025877">
    <property type="entry name" value="MobA-like_NTP_Trfase"/>
</dbReference>
<dbReference type="InterPro" id="IPR029044">
    <property type="entry name" value="Nucleotide-diphossugar_trans"/>
</dbReference>
<dbReference type="InterPro" id="IPR011004">
    <property type="entry name" value="Trimer_LpxA-like_sf"/>
</dbReference>
<dbReference type="NCBIfam" id="TIGR01173">
    <property type="entry name" value="glmU"/>
    <property type="match status" value="1"/>
</dbReference>
<dbReference type="PANTHER" id="PTHR43584:SF3">
    <property type="entry name" value="BIFUNCTIONAL PROTEIN GLMU"/>
    <property type="match status" value="1"/>
</dbReference>
<dbReference type="PANTHER" id="PTHR43584">
    <property type="entry name" value="NUCLEOTIDYL TRANSFERASE"/>
    <property type="match status" value="1"/>
</dbReference>
<dbReference type="Pfam" id="PF00132">
    <property type="entry name" value="Hexapep"/>
    <property type="match status" value="1"/>
</dbReference>
<dbReference type="Pfam" id="PF14602">
    <property type="entry name" value="Hexapep_2"/>
    <property type="match status" value="1"/>
</dbReference>
<dbReference type="Pfam" id="PF12804">
    <property type="entry name" value="NTP_transf_3"/>
    <property type="match status" value="1"/>
</dbReference>
<dbReference type="SUPFAM" id="SSF53448">
    <property type="entry name" value="Nucleotide-diphospho-sugar transferases"/>
    <property type="match status" value="1"/>
</dbReference>
<dbReference type="SUPFAM" id="SSF51161">
    <property type="entry name" value="Trimeric LpxA-like enzymes"/>
    <property type="match status" value="1"/>
</dbReference>
<comment type="function">
    <text evidence="1">Catalyzes the last two sequential reactions in the de novo biosynthetic pathway for UDP-N-acetylglucosamine (UDP-GlcNAc). The C-terminal domain catalyzes the transfer of acetyl group from acetyl coenzyme A to glucosamine-1-phosphate (GlcN-1-P) to produce N-acetylglucosamine-1-phosphate (GlcNAc-1-P), which is converted into UDP-GlcNAc by the transfer of uridine 5-monophosphate (from uridine 5-triphosphate), a reaction catalyzed by the N-terminal domain.</text>
</comment>
<comment type="catalytic activity">
    <reaction evidence="1">
        <text>alpha-D-glucosamine 1-phosphate + acetyl-CoA = N-acetyl-alpha-D-glucosamine 1-phosphate + CoA + H(+)</text>
        <dbReference type="Rhea" id="RHEA:13725"/>
        <dbReference type="ChEBI" id="CHEBI:15378"/>
        <dbReference type="ChEBI" id="CHEBI:57287"/>
        <dbReference type="ChEBI" id="CHEBI:57288"/>
        <dbReference type="ChEBI" id="CHEBI:57776"/>
        <dbReference type="ChEBI" id="CHEBI:58516"/>
        <dbReference type="EC" id="2.3.1.157"/>
    </reaction>
</comment>
<comment type="catalytic activity">
    <reaction evidence="1">
        <text>N-acetyl-alpha-D-glucosamine 1-phosphate + UTP + H(+) = UDP-N-acetyl-alpha-D-glucosamine + diphosphate</text>
        <dbReference type="Rhea" id="RHEA:13509"/>
        <dbReference type="ChEBI" id="CHEBI:15378"/>
        <dbReference type="ChEBI" id="CHEBI:33019"/>
        <dbReference type="ChEBI" id="CHEBI:46398"/>
        <dbReference type="ChEBI" id="CHEBI:57705"/>
        <dbReference type="ChEBI" id="CHEBI:57776"/>
        <dbReference type="EC" id="2.7.7.23"/>
    </reaction>
</comment>
<comment type="cofactor">
    <cofactor evidence="1">
        <name>Mg(2+)</name>
        <dbReference type="ChEBI" id="CHEBI:18420"/>
    </cofactor>
    <text evidence="1">Binds 1 Mg(2+) ion per subunit.</text>
</comment>
<comment type="pathway">
    <text evidence="1">Nucleotide-sugar biosynthesis; UDP-N-acetyl-alpha-D-glucosamine biosynthesis; N-acetyl-alpha-D-glucosamine 1-phosphate from alpha-D-glucosamine 6-phosphate (route II): step 2/2.</text>
</comment>
<comment type="pathway">
    <text evidence="1">Nucleotide-sugar biosynthesis; UDP-N-acetyl-alpha-D-glucosamine biosynthesis; UDP-N-acetyl-alpha-D-glucosamine from N-acetyl-alpha-D-glucosamine 1-phosphate: step 1/1.</text>
</comment>
<comment type="pathway">
    <text evidence="1">Bacterial outer membrane biogenesis; LPS lipid A biosynthesis.</text>
</comment>
<comment type="subunit">
    <text evidence="1">Homotrimer.</text>
</comment>
<comment type="subcellular location">
    <subcellularLocation>
        <location evidence="1">Cytoplasm</location>
    </subcellularLocation>
</comment>
<comment type="similarity">
    <text evidence="1">In the N-terminal section; belongs to the N-acetylglucosamine-1-phosphate uridyltransferase family.</text>
</comment>
<comment type="similarity">
    <text evidence="1">In the C-terminal section; belongs to the transferase hexapeptide repeat family.</text>
</comment>
<proteinExistence type="inferred from homology"/>
<keyword id="KW-0012">Acyltransferase</keyword>
<keyword id="KW-0133">Cell shape</keyword>
<keyword id="KW-0961">Cell wall biogenesis/degradation</keyword>
<keyword id="KW-0963">Cytoplasm</keyword>
<keyword id="KW-0460">Magnesium</keyword>
<keyword id="KW-0479">Metal-binding</keyword>
<keyword id="KW-0511">Multifunctional enzyme</keyword>
<keyword id="KW-0548">Nucleotidyltransferase</keyword>
<keyword id="KW-0573">Peptidoglycan synthesis</keyword>
<keyword id="KW-0677">Repeat</keyword>
<keyword id="KW-0808">Transferase</keyword>
<gene>
    <name evidence="1" type="primary">glmU</name>
    <name type="ordered locus">mma_3441</name>
</gene>
<name>GLMU_JANMA</name>
<reference key="1">
    <citation type="journal article" date="2007" name="PLoS Genet.">
        <title>Genome analysis of Minibacterium massiliensis highlights the convergent evolution of water-living bacteria.</title>
        <authorList>
            <person name="Audic S."/>
            <person name="Robert C."/>
            <person name="Campagna B."/>
            <person name="Parinello H."/>
            <person name="Claverie J.-M."/>
            <person name="Raoult D."/>
            <person name="Drancourt M."/>
        </authorList>
    </citation>
    <scope>NUCLEOTIDE SEQUENCE [LARGE SCALE GENOMIC DNA]</scope>
    <source>
        <strain>Marseille</strain>
    </source>
</reference>
<feature type="chain" id="PRO_1000056165" description="Bifunctional protein GlmU">
    <location>
        <begin position="1"/>
        <end position="452"/>
    </location>
</feature>
<feature type="region of interest" description="Pyrophosphorylase" evidence="1">
    <location>
        <begin position="1"/>
        <end position="224"/>
    </location>
</feature>
<feature type="region of interest" description="Linker" evidence="1">
    <location>
        <begin position="225"/>
        <end position="245"/>
    </location>
</feature>
<feature type="region of interest" description="N-acetyltransferase" evidence="1">
    <location>
        <begin position="246"/>
        <end position="452"/>
    </location>
</feature>
<feature type="active site" description="Proton acceptor" evidence="1">
    <location>
        <position position="358"/>
    </location>
</feature>
<feature type="binding site" evidence="1">
    <location>
        <begin position="6"/>
        <end position="9"/>
    </location>
    <ligand>
        <name>UDP-N-acetyl-alpha-D-glucosamine</name>
        <dbReference type="ChEBI" id="CHEBI:57705"/>
    </ligand>
</feature>
<feature type="binding site" evidence="1">
    <location>
        <position position="20"/>
    </location>
    <ligand>
        <name>UDP-N-acetyl-alpha-D-glucosamine</name>
        <dbReference type="ChEBI" id="CHEBI:57705"/>
    </ligand>
</feature>
<feature type="binding site" evidence="1">
    <location>
        <position position="71"/>
    </location>
    <ligand>
        <name>UDP-N-acetyl-alpha-D-glucosamine</name>
        <dbReference type="ChEBI" id="CHEBI:57705"/>
    </ligand>
</feature>
<feature type="binding site" evidence="1">
    <location>
        <begin position="76"/>
        <end position="77"/>
    </location>
    <ligand>
        <name>UDP-N-acetyl-alpha-D-glucosamine</name>
        <dbReference type="ChEBI" id="CHEBI:57705"/>
    </ligand>
</feature>
<feature type="binding site" evidence="1">
    <location>
        <begin position="98"/>
        <end position="100"/>
    </location>
    <ligand>
        <name>UDP-N-acetyl-alpha-D-glucosamine</name>
        <dbReference type="ChEBI" id="CHEBI:57705"/>
    </ligand>
</feature>
<feature type="binding site" evidence="1">
    <location>
        <position position="100"/>
    </location>
    <ligand>
        <name>Mg(2+)</name>
        <dbReference type="ChEBI" id="CHEBI:18420"/>
    </ligand>
</feature>
<feature type="binding site" evidence="1">
    <location>
        <position position="135"/>
    </location>
    <ligand>
        <name>UDP-N-acetyl-alpha-D-glucosamine</name>
        <dbReference type="ChEBI" id="CHEBI:57705"/>
    </ligand>
</feature>
<feature type="binding site" evidence="1">
    <location>
        <position position="149"/>
    </location>
    <ligand>
        <name>UDP-N-acetyl-alpha-D-glucosamine</name>
        <dbReference type="ChEBI" id="CHEBI:57705"/>
    </ligand>
</feature>
<feature type="binding site" evidence="1">
    <location>
        <position position="164"/>
    </location>
    <ligand>
        <name>UDP-N-acetyl-alpha-D-glucosamine</name>
        <dbReference type="ChEBI" id="CHEBI:57705"/>
    </ligand>
</feature>
<feature type="binding site" evidence="1">
    <location>
        <position position="222"/>
    </location>
    <ligand>
        <name>Mg(2+)</name>
        <dbReference type="ChEBI" id="CHEBI:18420"/>
    </ligand>
</feature>
<feature type="binding site" evidence="1">
    <location>
        <position position="222"/>
    </location>
    <ligand>
        <name>UDP-N-acetyl-alpha-D-glucosamine</name>
        <dbReference type="ChEBI" id="CHEBI:57705"/>
    </ligand>
</feature>
<feature type="binding site" evidence="1">
    <location>
        <position position="328"/>
    </location>
    <ligand>
        <name>UDP-N-acetyl-alpha-D-glucosamine</name>
        <dbReference type="ChEBI" id="CHEBI:57705"/>
    </ligand>
</feature>
<feature type="binding site" evidence="1">
    <location>
        <position position="346"/>
    </location>
    <ligand>
        <name>UDP-N-acetyl-alpha-D-glucosamine</name>
        <dbReference type="ChEBI" id="CHEBI:57705"/>
    </ligand>
</feature>
<feature type="binding site" evidence="1">
    <location>
        <position position="361"/>
    </location>
    <ligand>
        <name>UDP-N-acetyl-alpha-D-glucosamine</name>
        <dbReference type="ChEBI" id="CHEBI:57705"/>
    </ligand>
</feature>
<feature type="binding site" evidence="1">
    <location>
        <position position="372"/>
    </location>
    <ligand>
        <name>UDP-N-acetyl-alpha-D-glucosamine</name>
        <dbReference type="ChEBI" id="CHEBI:57705"/>
    </ligand>
</feature>
<feature type="binding site" evidence="1">
    <location>
        <position position="375"/>
    </location>
    <ligand>
        <name>acetyl-CoA</name>
        <dbReference type="ChEBI" id="CHEBI:57288"/>
    </ligand>
</feature>
<feature type="binding site" evidence="1">
    <location>
        <begin position="381"/>
        <end position="382"/>
    </location>
    <ligand>
        <name>acetyl-CoA</name>
        <dbReference type="ChEBI" id="CHEBI:57288"/>
    </ligand>
</feature>
<feature type="binding site" evidence="1">
    <location>
        <position position="400"/>
    </location>
    <ligand>
        <name>acetyl-CoA</name>
        <dbReference type="ChEBI" id="CHEBI:57288"/>
    </ligand>
</feature>
<feature type="binding site" evidence="1">
    <location>
        <position position="418"/>
    </location>
    <ligand>
        <name>acetyl-CoA</name>
        <dbReference type="ChEBI" id="CHEBI:57288"/>
    </ligand>
</feature>
<feature type="binding site" evidence="1">
    <location>
        <position position="435"/>
    </location>
    <ligand>
        <name>acetyl-CoA</name>
        <dbReference type="ChEBI" id="CHEBI:57288"/>
    </ligand>
</feature>
<accession>A6T3N4</accession>